<sequence>MGVNTAGDPQKSQPKINKGGIGKDESFGALFKPVYKGKKLADPVPTIEDKWQLLPAFLKVKGLVKQHLDSYNYFVDVDLKKIVQANEKVTSDVEPWFYLKYLDIRVGAPVRTDADAIQASISPHECRLRDLTYGANIYVDIEYTRGKQVVRRRNVPIGRMPVMLRSNKCVLSGKNEMEMAALNECPLDPGGYFIVKGTEKVILVQEQLSKNRIIVEAEPKKGLWQASVTSSTHERKSKTYVITKNGKLYLKHNSVADDIPIVVVLKAMGLQSDQEIFELVAGAEASYQDLFAPSIEECAKLNIYTAQQALEYIGARVKVNRRAGANRLPPHEEALEVLAAVVLAHINVFNLEFRPKAVYIGIMARRVLMAMVDPLQVDDRDYVGNKRLELAGQLLALLFEDLFKKFNSDLKLNIDKVLKKPHRTQEFDAYNQLTVHSDHITQGMVRALSTGNWSLKRFKMERAGVTHVLSRLSYISALGMMTRITSQFEKTRKVSGPRSLQASQFGMLCTSDTPEGEACGLVKNLALMTHITTDEEEEPIIKLAYAFGIEDIHVISGRELHSHGTYLVYLNGAILGISRYPSLFVASFRKLRRSGKISPFIGIFINTHQRAVFISTDGGRICRPLIIVQNGLPKVESKHIRLLKEGKWGFEDFLKQGLVEYVDVNEENDSLISVYERDITPDTTHLEIEPFTILGAVAGLIPYPHHNQSPRNTYQCAMGKQAIGAIAYNQLQRIDTLLYLMVYPQQPMVKTKTIELIGYDKLPAGQNATVAIMSYSGYDIEDALVLNKSSIDRGFGRCQVFHKHSVIVRKYPNGTHDRIGDPQRDPETGEVVWKHGVVEDDGLAGVGCRVQPGQIYVNKQTPTNALDNSITLGHTQTVESGYKATPMTYKAPEPGYIDKVMLTTTDSDQTLIKVLMRQTRRPELGDKFSSRHGQKGVCGVIVQQEDMPFNDQGICPDIIMNPHGFPSRMTVGKMIELLSGKVGVLRGTLEYGTCFGGTKVEDASRILVEHGYNYSGKDMLTSGITGETLEAYIFMGPIYYQKLKHMVMDKMHARARGPRAVLTRQPTEGRSRDGGLRLGEMERDCLIAYGASQLLLERLMISSDACDVDVCGQCGLLGYKGWCNSCQSTREVVKMTIPYAAKLLFQELLSMNIVPRLALEDEFKY</sequence>
<reference key="1">
    <citation type="journal article" date="2006" name="Nucleic Acids Res.">
        <title>Ancient origin, functional conservation and fast evolution of DNA-dependent RNA polymerase III.</title>
        <authorList>
            <person name="Proshkina G.M."/>
            <person name="Shematorova E.K."/>
            <person name="Proshkin S.A."/>
            <person name="Zaros C."/>
            <person name="Thuriaux P."/>
            <person name="Shpakovski G.V."/>
        </authorList>
    </citation>
    <scope>NUCLEOTIDE SEQUENCE [MRNA]</scope>
    <source>
        <strain>972 / ATCC 24843</strain>
    </source>
</reference>
<reference key="2">
    <citation type="journal article" date="2002" name="Nature">
        <title>The genome sequence of Schizosaccharomyces pombe.</title>
        <authorList>
            <person name="Wood V."/>
            <person name="Gwilliam R."/>
            <person name="Rajandream M.A."/>
            <person name="Lyne M.H."/>
            <person name="Lyne R."/>
            <person name="Stewart A."/>
            <person name="Sgouros J.G."/>
            <person name="Peat N."/>
            <person name="Hayles J."/>
            <person name="Baker S.G."/>
            <person name="Basham D."/>
            <person name="Bowman S."/>
            <person name="Brooks K."/>
            <person name="Brown D."/>
            <person name="Brown S."/>
            <person name="Chillingworth T."/>
            <person name="Churcher C.M."/>
            <person name="Collins M."/>
            <person name="Connor R."/>
            <person name="Cronin A."/>
            <person name="Davis P."/>
            <person name="Feltwell T."/>
            <person name="Fraser A."/>
            <person name="Gentles S."/>
            <person name="Goble A."/>
            <person name="Hamlin N."/>
            <person name="Harris D.E."/>
            <person name="Hidalgo J."/>
            <person name="Hodgson G."/>
            <person name="Holroyd S."/>
            <person name="Hornsby T."/>
            <person name="Howarth S."/>
            <person name="Huckle E.J."/>
            <person name="Hunt S."/>
            <person name="Jagels K."/>
            <person name="James K.D."/>
            <person name="Jones L."/>
            <person name="Jones M."/>
            <person name="Leather S."/>
            <person name="McDonald S."/>
            <person name="McLean J."/>
            <person name="Mooney P."/>
            <person name="Moule S."/>
            <person name="Mungall K.L."/>
            <person name="Murphy L.D."/>
            <person name="Niblett D."/>
            <person name="Odell C."/>
            <person name="Oliver K."/>
            <person name="O'Neil S."/>
            <person name="Pearson D."/>
            <person name="Quail M.A."/>
            <person name="Rabbinowitsch E."/>
            <person name="Rutherford K.M."/>
            <person name="Rutter S."/>
            <person name="Saunders D."/>
            <person name="Seeger K."/>
            <person name="Sharp S."/>
            <person name="Skelton J."/>
            <person name="Simmonds M.N."/>
            <person name="Squares R."/>
            <person name="Squares S."/>
            <person name="Stevens K."/>
            <person name="Taylor K."/>
            <person name="Taylor R.G."/>
            <person name="Tivey A."/>
            <person name="Walsh S.V."/>
            <person name="Warren T."/>
            <person name="Whitehead S."/>
            <person name="Woodward J.R."/>
            <person name="Volckaert G."/>
            <person name="Aert R."/>
            <person name="Robben J."/>
            <person name="Grymonprez B."/>
            <person name="Weltjens I."/>
            <person name="Vanstreels E."/>
            <person name="Rieger M."/>
            <person name="Schaefer M."/>
            <person name="Mueller-Auer S."/>
            <person name="Gabel C."/>
            <person name="Fuchs M."/>
            <person name="Duesterhoeft A."/>
            <person name="Fritzc C."/>
            <person name="Holzer E."/>
            <person name="Moestl D."/>
            <person name="Hilbert H."/>
            <person name="Borzym K."/>
            <person name="Langer I."/>
            <person name="Beck A."/>
            <person name="Lehrach H."/>
            <person name="Reinhardt R."/>
            <person name="Pohl T.M."/>
            <person name="Eger P."/>
            <person name="Zimmermann W."/>
            <person name="Wedler H."/>
            <person name="Wambutt R."/>
            <person name="Purnelle B."/>
            <person name="Goffeau A."/>
            <person name="Cadieu E."/>
            <person name="Dreano S."/>
            <person name="Gloux S."/>
            <person name="Lelaure V."/>
            <person name="Mottier S."/>
            <person name="Galibert F."/>
            <person name="Aves S.J."/>
            <person name="Xiang Z."/>
            <person name="Hunt C."/>
            <person name="Moore K."/>
            <person name="Hurst S.M."/>
            <person name="Lucas M."/>
            <person name="Rochet M."/>
            <person name="Gaillardin C."/>
            <person name="Tallada V.A."/>
            <person name="Garzon A."/>
            <person name="Thode G."/>
            <person name="Daga R.R."/>
            <person name="Cruzado L."/>
            <person name="Jimenez J."/>
            <person name="Sanchez M."/>
            <person name="del Rey F."/>
            <person name="Benito J."/>
            <person name="Dominguez A."/>
            <person name="Revuelta J.L."/>
            <person name="Moreno S."/>
            <person name="Armstrong J."/>
            <person name="Forsburg S.L."/>
            <person name="Cerutti L."/>
            <person name="Lowe T."/>
            <person name="McCombie W.R."/>
            <person name="Paulsen I."/>
            <person name="Potashkin J."/>
            <person name="Shpakovski G.V."/>
            <person name="Ussery D."/>
            <person name="Barrell B.G."/>
            <person name="Nurse P."/>
        </authorList>
    </citation>
    <scope>NUCLEOTIDE SEQUENCE [LARGE SCALE GENOMIC DNA]</scope>
    <source>
        <strain>972 / ATCC 24843</strain>
    </source>
</reference>
<feature type="chain" id="PRO_0000048095" description="DNA-directed RNA polymerase III subunit RPC2">
    <location>
        <begin position="1"/>
        <end position="1165"/>
    </location>
</feature>
<feature type="zinc finger region" description="C4-type" evidence="1">
    <location>
        <begin position="1111"/>
        <end position="1126"/>
    </location>
</feature>
<feature type="region of interest" description="Disordered" evidence="2">
    <location>
        <begin position="1"/>
        <end position="21"/>
    </location>
</feature>
<feature type="binding site" evidence="1">
    <location>
        <position position="1111"/>
    </location>
    <ligand>
        <name>Zn(2+)</name>
        <dbReference type="ChEBI" id="CHEBI:29105"/>
    </ligand>
</feature>
<feature type="binding site" evidence="1">
    <location>
        <position position="1114"/>
    </location>
    <ligand>
        <name>Zn(2+)</name>
        <dbReference type="ChEBI" id="CHEBI:29105"/>
    </ligand>
</feature>
<feature type="binding site" evidence="1">
    <location>
        <position position="1123"/>
    </location>
    <ligand>
        <name>Zn(2+)</name>
        <dbReference type="ChEBI" id="CHEBI:29105"/>
    </ligand>
</feature>
<feature type="binding site" evidence="1">
    <location>
        <position position="1126"/>
    </location>
    <ligand>
        <name>Zn(2+)</name>
        <dbReference type="ChEBI" id="CHEBI:29105"/>
    </ligand>
</feature>
<proteinExistence type="evidence at transcript level"/>
<dbReference type="EC" id="2.7.7.6"/>
<dbReference type="EMBL" id="DQ156226">
    <property type="protein sequence ID" value="ABA54854.1"/>
    <property type="molecule type" value="mRNA"/>
</dbReference>
<dbReference type="EMBL" id="CU329670">
    <property type="protein sequence ID" value="CAA93558.1"/>
    <property type="molecule type" value="Genomic_DNA"/>
</dbReference>
<dbReference type="PIR" id="T38867">
    <property type="entry name" value="T38867"/>
</dbReference>
<dbReference type="RefSeq" id="NP_593690.1">
    <property type="nucleotide sequence ID" value="NM_001019122.2"/>
</dbReference>
<dbReference type="SMR" id="Q10233"/>
<dbReference type="BioGRID" id="279815">
    <property type="interactions" value="6"/>
</dbReference>
<dbReference type="ComplexPortal" id="CPX-8905">
    <property type="entry name" value="DNA-directed RNA polymerase III complex"/>
</dbReference>
<dbReference type="DIP" id="DIP-29536N"/>
<dbReference type="FunCoup" id="Q10233">
    <property type="interactions" value="661"/>
</dbReference>
<dbReference type="IntAct" id="Q10233">
    <property type="interactions" value="3"/>
</dbReference>
<dbReference type="STRING" id="284812.Q10233"/>
<dbReference type="iPTMnet" id="Q10233"/>
<dbReference type="PaxDb" id="4896-SPAC4G9.08c.1"/>
<dbReference type="EnsemblFungi" id="SPAC4G9.08c.1">
    <property type="protein sequence ID" value="SPAC4G9.08c.1:pep"/>
    <property type="gene ID" value="SPAC4G9.08c"/>
</dbReference>
<dbReference type="GeneID" id="2543393"/>
<dbReference type="KEGG" id="spo:2543393"/>
<dbReference type="PomBase" id="SPAC4G9.08c">
    <property type="gene designation" value="rpc2"/>
</dbReference>
<dbReference type="VEuPathDB" id="FungiDB:SPAC4G9.08c"/>
<dbReference type="eggNOG" id="KOG0215">
    <property type="taxonomic scope" value="Eukaryota"/>
</dbReference>
<dbReference type="HOGENOM" id="CLU_000524_5_1_1"/>
<dbReference type="InParanoid" id="Q10233"/>
<dbReference type="OMA" id="LAYCSWC"/>
<dbReference type="PhylomeDB" id="Q10233"/>
<dbReference type="Reactome" id="R-SPO-76061">
    <property type="pathway name" value="RNA Polymerase III Transcription Initiation From Type 1 Promoter"/>
</dbReference>
<dbReference type="Reactome" id="R-SPO-76066">
    <property type="pathway name" value="RNA Polymerase III Transcription Initiation From Type 2 Promoter"/>
</dbReference>
<dbReference type="PRO" id="PR:Q10233"/>
<dbReference type="Proteomes" id="UP000002485">
    <property type="component" value="Chromosome I"/>
</dbReference>
<dbReference type="GO" id="GO:0000785">
    <property type="term" value="C:chromatin"/>
    <property type="evidence" value="ECO:0000314"/>
    <property type="project" value="PomBase"/>
</dbReference>
<dbReference type="GO" id="GO:0005829">
    <property type="term" value="C:cytosol"/>
    <property type="evidence" value="ECO:0007005"/>
    <property type="project" value="PomBase"/>
</dbReference>
<dbReference type="GO" id="GO:0005739">
    <property type="term" value="C:mitochondrion"/>
    <property type="evidence" value="ECO:0007669"/>
    <property type="project" value="GOC"/>
</dbReference>
<dbReference type="GO" id="GO:0005666">
    <property type="term" value="C:RNA polymerase III complex"/>
    <property type="evidence" value="ECO:0000318"/>
    <property type="project" value="GO_Central"/>
</dbReference>
<dbReference type="GO" id="GO:0003677">
    <property type="term" value="F:DNA binding"/>
    <property type="evidence" value="ECO:0007669"/>
    <property type="project" value="InterPro"/>
</dbReference>
<dbReference type="GO" id="GO:0003899">
    <property type="term" value="F:DNA-directed RNA polymerase activity"/>
    <property type="evidence" value="ECO:0007669"/>
    <property type="project" value="UniProtKB-EC"/>
</dbReference>
<dbReference type="GO" id="GO:0032549">
    <property type="term" value="F:ribonucleoside binding"/>
    <property type="evidence" value="ECO:0007669"/>
    <property type="project" value="InterPro"/>
</dbReference>
<dbReference type="GO" id="GO:0008270">
    <property type="term" value="F:zinc ion binding"/>
    <property type="evidence" value="ECO:0007669"/>
    <property type="project" value="UniProtKB-KW"/>
</dbReference>
<dbReference type="GO" id="GO:0006386">
    <property type="term" value="P:termination of RNA polymerase III transcription"/>
    <property type="evidence" value="ECO:0000315"/>
    <property type="project" value="PomBase"/>
</dbReference>
<dbReference type="CDD" id="cd00653">
    <property type="entry name" value="RNA_pol_B_RPB2"/>
    <property type="match status" value="1"/>
</dbReference>
<dbReference type="FunFam" id="2.40.270.10:FF:000006">
    <property type="entry name" value="DNA-directed RNA polymerase subunit beta"/>
    <property type="match status" value="1"/>
</dbReference>
<dbReference type="FunFam" id="2.40.270.10:FF:000011">
    <property type="entry name" value="DNA-directed RNA polymerase subunit beta"/>
    <property type="match status" value="1"/>
</dbReference>
<dbReference type="FunFam" id="3.90.1070.20:FF:000002">
    <property type="entry name" value="DNA-directed RNA polymerase subunit beta"/>
    <property type="match status" value="1"/>
</dbReference>
<dbReference type="FunFam" id="3.90.1100.10:FF:000019">
    <property type="entry name" value="DNA-directed RNA polymerase subunit beta"/>
    <property type="match status" value="1"/>
</dbReference>
<dbReference type="FunFam" id="3.90.1100.10:FF:000020">
    <property type="entry name" value="DNA-directed RNA polymerase subunit beta"/>
    <property type="match status" value="1"/>
</dbReference>
<dbReference type="FunFam" id="3.90.1110.10:FF:000006">
    <property type="entry name" value="DNA-directed RNA polymerase subunit beta"/>
    <property type="match status" value="1"/>
</dbReference>
<dbReference type="FunFam" id="3.90.1800.10:FF:000003">
    <property type="entry name" value="DNA-directed RNA polymerase subunit beta"/>
    <property type="match status" value="1"/>
</dbReference>
<dbReference type="Gene3D" id="2.40.50.150">
    <property type="match status" value="1"/>
</dbReference>
<dbReference type="Gene3D" id="3.90.1070.20">
    <property type="match status" value="1"/>
</dbReference>
<dbReference type="Gene3D" id="3.90.1100.10">
    <property type="match status" value="1"/>
</dbReference>
<dbReference type="Gene3D" id="2.40.270.10">
    <property type="entry name" value="DNA-directed RNA polymerase, subunit 2, domain 6"/>
    <property type="match status" value="1"/>
</dbReference>
<dbReference type="Gene3D" id="3.90.1800.10">
    <property type="entry name" value="RNA polymerase alpha subunit dimerisation domain"/>
    <property type="match status" value="1"/>
</dbReference>
<dbReference type="Gene3D" id="3.90.1110.10">
    <property type="entry name" value="RNA polymerase Rpb2, domain 2"/>
    <property type="match status" value="1"/>
</dbReference>
<dbReference type="InterPro" id="IPR015712">
    <property type="entry name" value="DNA-dir_RNA_pol_su2"/>
</dbReference>
<dbReference type="InterPro" id="IPR007120">
    <property type="entry name" value="DNA-dir_RNAP_su2_dom"/>
</dbReference>
<dbReference type="InterPro" id="IPR037033">
    <property type="entry name" value="DNA-dir_RNAP_su2_hyb_sf"/>
</dbReference>
<dbReference type="InterPro" id="IPR007121">
    <property type="entry name" value="RNA_pol_bsu_CS"/>
</dbReference>
<dbReference type="InterPro" id="IPR007644">
    <property type="entry name" value="RNA_pol_bsu_protrusion"/>
</dbReference>
<dbReference type="InterPro" id="IPR007642">
    <property type="entry name" value="RNA_pol_Rpb2_2"/>
</dbReference>
<dbReference type="InterPro" id="IPR037034">
    <property type="entry name" value="RNA_pol_Rpb2_2_sf"/>
</dbReference>
<dbReference type="InterPro" id="IPR007645">
    <property type="entry name" value="RNA_pol_Rpb2_3"/>
</dbReference>
<dbReference type="InterPro" id="IPR007646">
    <property type="entry name" value="RNA_pol_Rpb2_4"/>
</dbReference>
<dbReference type="InterPro" id="IPR007647">
    <property type="entry name" value="RNA_pol_Rpb2_5"/>
</dbReference>
<dbReference type="InterPro" id="IPR007641">
    <property type="entry name" value="RNA_pol_Rpb2_7"/>
</dbReference>
<dbReference type="InterPro" id="IPR014724">
    <property type="entry name" value="RNA_pol_RPB2_OB-fold"/>
</dbReference>
<dbReference type="NCBIfam" id="NF007175">
    <property type="entry name" value="PRK09606.1"/>
    <property type="match status" value="1"/>
</dbReference>
<dbReference type="PANTHER" id="PTHR20856">
    <property type="entry name" value="DNA-DIRECTED RNA POLYMERASE I SUBUNIT 2"/>
    <property type="match status" value="1"/>
</dbReference>
<dbReference type="Pfam" id="PF04563">
    <property type="entry name" value="RNA_pol_Rpb2_1"/>
    <property type="match status" value="1"/>
</dbReference>
<dbReference type="Pfam" id="PF04561">
    <property type="entry name" value="RNA_pol_Rpb2_2"/>
    <property type="match status" value="1"/>
</dbReference>
<dbReference type="Pfam" id="PF04565">
    <property type="entry name" value="RNA_pol_Rpb2_3"/>
    <property type="match status" value="1"/>
</dbReference>
<dbReference type="Pfam" id="PF04566">
    <property type="entry name" value="RNA_pol_Rpb2_4"/>
    <property type="match status" value="1"/>
</dbReference>
<dbReference type="Pfam" id="PF04567">
    <property type="entry name" value="RNA_pol_Rpb2_5"/>
    <property type="match status" value="1"/>
</dbReference>
<dbReference type="Pfam" id="PF00562">
    <property type="entry name" value="RNA_pol_Rpb2_6"/>
    <property type="match status" value="1"/>
</dbReference>
<dbReference type="Pfam" id="PF04560">
    <property type="entry name" value="RNA_pol_Rpb2_7"/>
    <property type="match status" value="1"/>
</dbReference>
<dbReference type="SUPFAM" id="SSF64484">
    <property type="entry name" value="beta and beta-prime subunits of DNA dependent RNA-polymerase"/>
    <property type="match status" value="1"/>
</dbReference>
<dbReference type="PROSITE" id="PS01166">
    <property type="entry name" value="RNA_POL_BETA"/>
    <property type="match status" value="1"/>
</dbReference>
<keyword id="KW-0240">DNA-directed RNA polymerase</keyword>
<keyword id="KW-0479">Metal-binding</keyword>
<keyword id="KW-0548">Nucleotidyltransferase</keyword>
<keyword id="KW-0539">Nucleus</keyword>
<keyword id="KW-1185">Reference proteome</keyword>
<keyword id="KW-0804">Transcription</keyword>
<keyword id="KW-0808">Transferase</keyword>
<keyword id="KW-0862">Zinc</keyword>
<keyword id="KW-0863">Zinc-finger</keyword>
<name>RPC2_SCHPO</name>
<evidence type="ECO:0000250" key="1"/>
<evidence type="ECO:0000256" key="2">
    <source>
        <dbReference type="SAM" id="MobiDB-lite"/>
    </source>
</evidence>
<evidence type="ECO:0000305" key="3"/>
<gene>
    <name type="primary">rpc2</name>
    <name type="ORF">SPAC4G9.08c</name>
</gene>
<comment type="function">
    <text evidence="1">DNA-dependent RNA polymerase catalyzes the transcription of DNA into RNA using the four ribonucleoside triphosphates as substrates. Second largest core component of RNA polymerase III which synthesizes small RNAs, such as 5S rRNA and tRNAs. Proposed to contribute to the polymerase catalytic activity and forms the polymerase active center together with the largest subunit. Pol III is composed of mobile elements and RPC2 is part of the core element with the central large cleft and probably a clamp element that moves to open and close the cleft (By similarity).</text>
</comment>
<comment type="catalytic activity">
    <reaction>
        <text>RNA(n) + a ribonucleoside 5'-triphosphate = RNA(n+1) + diphosphate</text>
        <dbReference type="Rhea" id="RHEA:21248"/>
        <dbReference type="Rhea" id="RHEA-COMP:14527"/>
        <dbReference type="Rhea" id="RHEA-COMP:17342"/>
        <dbReference type="ChEBI" id="CHEBI:33019"/>
        <dbReference type="ChEBI" id="CHEBI:61557"/>
        <dbReference type="ChEBI" id="CHEBI:140395"/>
        <dbReference type="EC" id="2.7.7.6"/>
    </reaction>
</comment>
<comment type="subunit">
    <text evidence="1">Component of the RNA polymerase III (Pol III) complex consisting of 17 subunits.</text>
</comment>
<comment type="subcellular location">
    <subcellularLocation>
        <location evidence="1">Nucleus</location>
    </subcellularLocation>
</comment>
<comment type="similarity">
    <text evidence="3">Belongs to the RNA polymerase beta chain family.</text>
</comment>
<protein>
    <recommendedName>
        <fullName>DNA-directed RNA polymerase III subunit RPC2</fullName>
        <shortName>RNA polymerase III subunit 2</shortName>
        <shortName>RNA polymerase III subunit C2</shortName>
        <ecNumber>2.7.7.6</ecNumber>
    </recommendedName>
    <alternativeName>
        <fullName>C128</fullName>
    </alternativeName>
    <alternativeName>
        <fullName>DNA-directed RNA polymerase III 130 kDa polypeptide</fullName>
    </alternativeName>
    <alternativeName>
        <fullName>RPC130</fullName>
    </alternativeName>
</protein>
<accession>Q10233</accession>
<accession>Q0QYE4</accession>
<organism>
    <name type="scientific">Schizosaccharomyces pombe (strain 972 / ATCC 24843)</name>
    <name type="common">Fission yeast</name>
    <dbReference type="NCBI Taxonomy" id="284812"/>
    <lineage>
        <taxon>Eukaryota</taxon>
        <taxon>Fungi</taxon>
        <taxon>Dikarya</taxon>
        <taxon>Ascomycota</taxon>
        <taxon>Taphrinomycotina</taxon>
        <taxon>Schizosaccharomycetes</taxon>
        <taxon>Schizosaccharomycetales</taxon>
        <taxon>Schizosaccharomycetaceae</taxon>
        <taxon>Schizosaccharomyces</taxon>
    </lineage>
</organism>